<keyword id="KW-1185">Reference proteome</keyword>
<keyword id="KW-0687">Ribonucleoprotein</keyword>
<keyword id="KW-0689">Ribosomal protein</keyword>
<keyword id="KW-0694">RNA-binding</keyword>
<keyword id="KW-0699">rRNA-binding</keyword>
<name>RL23_METST</name>
<comment type="function">
    <text evidence="1">Binds to 23S rRNA. One of the proteins that surrounds the polypeptide exit tunnel on the outside of the ribosome.</text>
</comment>
<comment type="subunit">
    <text evidence="1">Part of the 50S ribosomal subunit. Contacts protein L29.</text>
</comment>
<comment type="similarity">
    <text evidence="1">Belongs to the universal ribosomal protein uL23 family.</text>
</comment>
<gene>
    <name evidence="1" type="primary">rpl23</name>
    <name type="ordered locus">Msp_0907</name>
</gene>
<protein>
    <recommendedName>
        <fullName evidence="1">Large ribosomal subunit protein uL23</fullName>
    </recommendedName>
    <alternativeName>
        <fullName evidence="2">50S ribosomal protein L23</fullName>
    </alternativeName>
</protein>
<evidence type="ECO:0000255" key="1">
    <source>
        <dbReference type="HAMAP-Rule" id="MF_01369"/>
    </source>
</evidence>
<evidence type="ECO:0000305" key="2"/>
<reference key="1">
    <citation type="journal article" date="2006" name="J. Bacteriol.">
        <title>The genome sequence of Methanosphaera stadtmanae reveals why this human intestinal archaeon is restricted to methanol and H2 for methane formation and ATP synthesis.</title>
        <authorList>
            <person name="Fricke W.F."/>
            <person name="Seedorf H."/>
            <person name="Henne A."/>
            <person name="Kruer M."/>
            <person name="Liesegang H."/>
            <person name="Hedderich R."/>
            <person name="Gottschalk G."/>
            <person name="Thauer R.K."/>
        </authorList>
    </citation>
    <scope>NUCLEOTIDE SEQUENCE [LARGE SCALE GENOMIC DNA]</scope>
    <source>
        <strain>ATCC 43021 / DSM 3091 / JCM 11832 / MCB-3</strain>
    </source>
</reference>
<dbReference type="EMBL" id="CP000102">
    <property type="protein sequence ID" value="ABC57295.1"/>
    <property type="molecule type" value="Genomic_DNA"/>
</dbReference>
<dbReference type="RefSeq" id="WP_011406494.1">
    <property type="nucleotide sequence ID" value="NC_007681.1"/>
</dbReference>
<dbReference type="SMR" id="Q2NFV8"/>
<dbReference type="STRING" id="339860.Msp_0907"/>
<dbReference type="KEGG" id="mst:Msp_0907"/>
<dbReference type="eggNOG" id="arCOG04072">
    <property type="taxonomic scope" value="Archaea"/>
</dbReference>
<dbReference type="HOGENOM" id="CLU_037562_4_2_2"/>
<dbReference type="OrthoDB" id="7751at2157"/>
<dbReference type="Proteomes" id="UP000001931">
    <property type="component" value="Chromosome"/>
</dbReference>
<dbReference type="GO" id="GO:1990904">
    <property type="term" value="C:ribonucleoprotein complex"/>
    <property type="evidence" value="ECO:0007669"/>
    <property type="project" value="UniProtKB-KW"/>
</dbReference>
<dbReference type="GO" id="GO:0005840">
    <property type="term" value="C:ribosome"/>
    <property type="evidence" value="ECO:0007669"/>
    <property type="project" value="UniProtKB-KW"/>
</dbReference>
<dbReference type="GO" id="GO:0019843">
    <property type="term" value="F:rRNA binding"/>
    <property type="evidence" value="ECO:0007669"/>
    <property type="project" value="UniProtKB-UniRule"/>
</dbReference>
<dbReference type="GO" id="GO:0003735">
    <property type="term" value="F:structural constituent of ribosome"/>
    <property type="evidence" value="ECO:0007669"/>
    <property type="project" value="InterPro"/>
</dbReference>
<dbReference type="GO" id="GO:0006412">
    <property type="term" value="P:translation"/>
    <property type="evidence" value="ECO:0007669"/>
    <property type="project" value="UniProtKB-UniRule"/>
</dbReference>
<dbReference type="FunFam" id="3.30.70.330:FF:000532">
    <property type="entry name" value="50S ribosomal protein L23"/>
    <property type="match status" value="1"/>
</dbReference>
<dbReference type="Gene3D" id="3.30.70.330">
    <property type="match status" value="1"/>
</dbReference>
<dbReference type="HAMAP" id="MF_01369_A">
    <property type="entry name" value="Ribosomal_uL23_A"/>
    <property type="match status" value="1"/>
</dbReference>
<dbReference type="InterPro" id="IPR012677">
    <property type="entry name" value="Nucleotide-bd_a/b_plait_sf"/>
</dbReference>
<dbReference type="InterPro" id="IPR019985">
    <property type="entry name" value="Ribosomal_uL23"/>
</dbReference>
<dbReference type="InterPro" id="IPR013025">
    <property type="entry name" value="Ribosomal_uL23-like"/>
</dbReference>
<dbReference type="InterPro" id="IPR012678">
    <property type="entry name" value="Ribosomal_uL23/eL15/eS24_sf"/>
</dbReference>
<dbReference type="NCBIfam" id="NF011118">
    <property type="entry name" value="PRK14548.1"/>
    <property type="match status" value="1"/>
</dbReference>
<dbReference type="NCBIfam" id="TIGR03636">
    <property type="entry name" value="uL23_arch"/>
    <property type="match status" value="1"/>
</dbReference>
<dbReference type="PANTHER" id="PTHR11620">
    <property type="entry name" value="60S RIBOSOMAL PROTEIN L23A"/>
    <property type="match status" value="1"/>
</dbReference>
<dbReference type="Pfam" id="PF00276">
    <property type="entry name" value="Ribosomal_L23"/>
    <property type="match status" value="1"/>
</dbReference>
<dbReference type="SUPFAM" id="SSF54189">
    <property type="entry name" value="Ribosomal proteins S24e, L23 and L15e"/>
    <property type="match status" value="1"/>
</dbReference>
<proteinExistence type="inferred from homology"/>
<organism>
    <name type="scientific">Methanosphaera stadtmanae (strain ATCC 43021 / DSM 3091 / JCM 11832 / MCB-3)</name>
    <dbReference type="NCBI Taxonomy" id="339860"/>
    <lineage>
        <taxon>Archaea</taxon>
        <taxon>Methanobacteriati</taxon>
        <taxon>Methanobacteriota</taxon>
        <taxon>Methanomada group</taxon>
        <taxon>Methanobacteria</taxon>
        <taxon>Methanobacteriales</taxon>
        <taxon>Methanobacteriaceae</taxon>
        <taxon>Methanosphaera</taxon>
    </lineage>
</organism>
<sequence>MDPYSVIIKPQLSEKTMNQIYDENKITFVVRRSANKRVIKEAFQDLYDTKVVGVNTHITPRGNKVATIELEEADAAEDIAVRLGVF</sequence>
<accession>Q2NFV8</accession>
<feature type="chain" id="PRO_0000272947" description="Large ribosomal subunit protein uL23">
    <location>
        <begin position="1"/>
        <end position="86"/>
    </location>
</feature>